<feature type="chain" id="PRO_1000089369" description="Dihydroxy-acid dehydratase">
    <location>
        <begin position="1"/>
        <end position="557"/>
    </location>
</feature>
<feature type="active site" description="Proton acceptor" evidence="1">
    <location>
        <position position="468"/>
    </location>
</feature>
<feature type="binding site" evidence="1">
    <location>
        <position position="78"/>
    </location>
    <ligand>
        <name>Mg(2+)</name>
        <dbReference type="ChEBI" id="CHEBI:18420"/>
    </ligand>
</feature>
<feature type="binding site" evidence="1">
    <location>
        <position position="119"/>
    </location>
    <ligand>
        <name>[2Fe-2S] cluster</name>
        <dbReference type="ChEBI" id="CHEBI:190135"/>
    </ligand>
</feature>
<feature type="binding site" evidence="1">
    <location>
        <position position="120"/>
    </location>
    <ligand>
        <name>Mg(2+)</name>
        <dbReference type="ChEBI" id="CHEBI:18420"/>
    </ligand>
</feature>
<feature type="binding site" description="via carbamate group" evidence="1">
    <location>
        <position position="121"/>
    </location>
    <ligand>
        <name>Mg(2+)</name>
        <dbReference type="ChEBI" id="CHEBI:18420"/>
    </ligand>
</feature>
<feature type="binding site" evidence="1">
    <location>
        <position position="192"/>
    </location>
    <ligand>
        <name>[2Fe-2S] cluster</name>
        <dbReference type="ChEBI" id="CHEBI:190135"/>
    </ligand>
</feature>
<feature type="binding site" evidence="1">
    <location>
        <position position="442"/>
    </location>
    <ligand>
        <name>Mg(2+)</name>
        <dbReference type="ChEBI" id="CHEBI:18420"/>
    </ligand>
</feature>
<feature type="modified residue" description="N6-carboxylysine" evidence="1">
    <location>
        <position position="121"/>
    </location>
</feature>
<name>ILVD_BACMK</name>
<organism>
    <name type="scientific">Bacillus mycoides (strain KBAB4)</name>
    <name type="common">Bacillus weihenstephanensis</name>
    <dbReference type="NCBI Taxonomy" id="315730"/>
    <lineage>
        <taxon>Bacteria</taxon>
        <taxon>Bacillati</taxon>
        <taxon>Bacillota</taxon>
        <taxon>Bacilli</taxon>
        <taxon>Bacillales</taxon>
        <taxon>Bacillaceae</taxon>
        <taxon>Bacillus</taxon>
        <taxon>Bacillus cereus group</taxon>
    </lineage>
</organism>
<evidence type="ECO:0000255" key="1">
    <source>
        <dbReference type="HAMAP-Rule" id="MF_00012"/>
    </source>
</evidence>
<proteinExistence type="inferred from homology"/>
<dbReference type="EC" id="4.2.1.9" evidence="1"/>
<dbReference type="EMBL" id="CP000903">
    <property type="protein sequence ID" value="ABY42949.1"/>
    <property type="molecule type" value="Genomic_DNA"/>
</dbReference>
<dbReference type="RefSeq" id="WP_002012150.1">
    <property type="nucleotide sequence ID" value="NZ_CAKMRX030000144.1"/>
</dbReference>
<dbReference type="SMR" id="A9VPN7"/>
<dbReference type="GeneID" id="66263148"/>
<dbReference type="KEGG" id="bwe:BcerKBAB4_1710"/>
<dbReference type="eggNOG" id="COG0129">
    <property type="taxonomic scope" value="Bacteria"/>
</dbReference>
<dbReference type="HOGENOM" id="CLU_014271_4_2_9"/>
<dbReference type="UniPathway" id="UPA00047">
    <property type="reaction ID" value="UER00057"/>
</dbReference>
<dbReference type="UniPathway" id="UPA00049">
    <property type="reaction ID" value="UER00061"/>
</dbReference>
<dbReference type="Proteomes" id="UP000002154">
    <property type="component" value="Chromosome"/>
</dbReference>
<dbReference type="GO" id="GO:0005829">
    <property type="term" value="C:cytosol"/>
    <property type="evidence" value="ECO:0007669"/>
    <property type="project" value="TreeGrafter"/>
</dbReference>
<dbReference type="GO" id="GO:0051537">
    <property type="term" value="F:2 iron, 2 sulfur cluster binding"/>
    <property type="evidence" value="ECO:0007669"/>
    <property type="project" value="UniProtKB-UniRule"/>
</dbReference>
<dbReference type="GO" id="GO:0004160">
    <property type="term" value="F:dihydroxy-acid dehydratase activity"/>
    <property type="evidence" value="ECO:0007669"/>
    <property type="project" value="UniProtKB-UniRule"/>
</dbReference>
<dbReference type="GO" id="GO:0000287">
    <property type="term" value="F:magnesium ion binding"/>
    <property type="evidence" value="ECO:0007669"/>
    <property type="project" value="UniProtKB-UniRule"/>
</dbReference>
<dbReference type="GO" id="GO:0009097">
    <property type="term" value="P:isoleucine biosynthetic process"/>
    <property type="evidence" value="ECO:0007669"/>
    <property type="project" value="UniProtKB-UniRule"/>
</dbReference>
<dbReference type="GO" id="GO:0009099">
    <property type="term" value="P:L-valine biosynthetic process"/>
    <property type="evidence" value="ECO:0007669"/>
    <property type="project" value="UniProtKB-UniRule"/>
</dbReference>
<dbReference type="FunFam" id="3.50.30.80:FF:000001">
    <property type="entry name" value="Dihydroxy-acid dehydratase"/>
    <property type="match status" value="1"/>
</dbReference>
<dbReference type="Gene3D" id="3.50.30.80">
    <property type="entry name" value="IlvD/EDD C-terminal domain-like"/>
    <property type="match status" value="1"/>
</dbReference>
<dbReference type="HAMAP" id="MF_00012">
    <property type="entry name" value="IlvD"/>
    <property type="match status" value="1"/>
</dbReference>
<dbReference type="InterPro" id="IPR042096">
    <property type="entry name" value="Dihydro-acid_dehy_C"/>
</dbReference>
<dbReference type="InterPro" id="IPR004404">
    <property type="entry name" value="DihydroxyA_deHydtase"/>
</dbReference>
<dbReference type="InterPro" id="IPR020558">
    <property type="entry name" value="DiOHA_6PGluconate_deHydtase_CS"/>
</dbReference>
<dbReference type="InterPro" id="IPR056740">
    <property type="entry name" value="ILV_EDD_C"/>
</dbReference>
<dbReference type="InterPro" id="IPR000581">
    <property type="entry name" value="ILV_EDD_N"/>
</dbReference>
<dbReference type="InterPro" id="IPR037237">
    <property type="entry name" value="IlvD/EDD_N"/>
</dbReference>
<dbReference type="NCBIfam" id="TIGR00110">
    <property type="entry name" value="ilvD"/>
    <property type="match status" value="1"/>
</dbReference>
<dbReference type="NCBIfam" id="NF002068">
    <property type="entry name" value="PRK00911.1"/>
    <property type="match status" value="1"/>
</dbReference>
<dbReference type="PANTHER" id="PTHR43661">
    <property type="entry name" value="D-XYLONATE DEHYDRATASE"/>
    <property type="match status" value="1"/>
</dbReference>
<dbReference type="PANTHER" id="PTHR43661:SF3">
    <property type="entry name" value="D-XYLONATE DEHYDRATASE YAGF-RELATED"/>
    <property type="match status" value="1"/>
</dbReference>
<dbReference type="Pfam" id="PF24877">
    <property type="entry name" value="ILV_EDD_C"/>
    <property type="match status" value="1"/>
</dbReference>
<dbReference type="Pfam" id="PF00920">
    <property type="entry name" value="ILVD_EDD_N"/>
    <property type="match status" value="1"/>
</dbReference>
<dbReference type="SUPFAM" id="SSF143975">
    <property type="entry name" value="IlvD/EDD N-terminal domain-like"/>
    <property type="match status" value="1"/>
</dbReference>
<dbReference type="SUPFAM" id="SSF52016">
    <property type="entry name" value="LeuD/IlvD-like"/>
    <property type="match status" value="1"/>
</dbReference>
<dbReference type="PROSITE" id="PS00886">
    <property type="entry name" value="ILVD_EDD_1"/>
    <property type="match status" value="1"/>
</dbReference>
<dbReference type="PROSITE" id="PS00887">
    <property type="entry name" value="ILVD_EDD_2"/>
    <property type="match status" value="1"/>
</dbReference>
<reference key="1">
    <citation type="journal article" date="2008" name="Chem. Biol. Interact.">
        <title>Extending the Bacillus cereus group genomics to putative food-borne pathogens of different toxicity.</title>
        <authorList>
            <person name="Lapidus A."/>
            <person name="Goltsman E."/>
            <person name="Auger S."/>
            <person name="Galleron N."/>
            <person name="Segurens B."/>
            <person name="Dossat C."/>
            <person name="Land M.L."/>
            <person name="Broussolle V."/>
            <person name="Brillard J."/>
            <person name="Guinebretiere M.-H."/>
            <person name="Sanchis V."/>
            <person name="Nguen-the C."/>
            <person name="Lereclus D."/>
            <person name="Richardson P."/>
            <person name="Wincker P."/>
            <person name="Weissenbach J."/>
            <person name="Ehrlich S.D."/>
            <person name="Sorokin A."/>
        </authorList>
    </citation>
    <scope>NUCLEOTIDE SEQUENCE [LARGE SCALE GENOMIC DNA]</scope>
    <source>
        <strain>KBAB4</strain>
    </source>
</reference>
<sequence>MRSDMIKKGFDKAPHRSLLKATGLKDEDFDKPFIAICNSFIEIIPGHKHLNEFGKLVKEAVRAAGMVPFEFNTIGVDDGIAMGHIGMRYSLPSREIIADSVETVVNAHWFDGMICIPNCDKITPGMMMAALRINIPTVFVSGGPMAAGKTSKGEVVDLSSVFEGVGAYQSGKISEEELKDIEDHGCPSCGSCSGMFTANSMNCLCEVLGLALPGNGSILAIDPRREELIKQAAEKLKILIERDIKPRDIVTEEAIDDAFALDMAMGGSTNTVLHTLALAQEAGLDYDMNRIDAVSRRVPHLCKVSPASNWHMEDIDRAGGISAILKEMSRKEGVLHLDRITATGQTLRENIAHAEIQDKEVIHSLENPHSEEGGLRILKGNLAKDGAVIKSGATEVKRFEGPCVIFNSQDEALAGIMLGKVKKGDVVVIRYEGPRGGPGMPEMLAPTSAIAGMGLGADVALLTDGRFSGASRGISVGHISPEAAAGGTIALLEQGDIVCIDVEERLLEVRVSDEELEKRKKGWKRPEPKVKTGWLGRYAQMVTSANTGAVLKIPNFD</sequence>
<comment type="function">
    <text evidence="1">Functions in the biosynthesis of branched-chain amino acids. Catalyzes the dehydration of (2R,3R)-2,3-dihydroxy-3-methylpentanoate (2,3-dihydroxy-3-methylvalerate) into 2-oxo-3-methylpentanoate (2-oxo-3-methylvalerate) and of (2R)-2,3-dihydroxy-3-methylbutanoate (2,3-dihydroxyisovalerate) into 2-oxo-3-methylbutanoate (2-oxoisovalerate), the penultimate precursor to L-isoleucine and L-valine, respectively.</text>
</comment>
<comment type="catalytic activity">
    <reaction evidence="1">
        <text>(2R)-2,3-dihydroxy-3-methylbutanoate = 3-methyl-2-oxobutanoate + H2O</text>
        <dbReference type="Rhea" id="RHEA:24809"/>
        <dbReference type="ChEBI" id="CHEBI:11851"/>
        <dbReference type="ChEBI" id="CHEBI:15377"/>
        <dbReference type="ChEBI" id="CHEBI:49072"/>
        <dbReference type="EC" id="4.2.1.9"/>
    </reaction>
    <physiologicalReaction direction="left-to-right" evidence="1">
        <dbReference type="Rhea" id="RHEA:24810"/>
    </physiologicalReaction>
</comment>
<comment type="catalytic activity">
    <reaction evidence="1">
        <text>(2R,3R)-2,3-dihydroxy-3-methylpentanoate = (S)-3-methyl-2-oxopentanoate + H2O</text>
        <dbReference type="Rhea" id="RHEA:27694"/>
        <dbReference type="ChEBI" id="CHEBI:15377"/>
        <dbReference type="ChEBI" id="CHEBI:35146"/>
        <dbReference type="ChEBI" id="CHEBI:49258"/>
        <dbReference type="EC" id="4.2.1.9"/>
    </reaction>
    <physiologicalReaction direction="left-to-right" evidence="1">
        <dbReference type="Rhea" id="RHEA:27695"/>
    </physiologicalReaction>
</comment>
<comment type="cofactor">
    <cofactor evidence="1">
        <name>[2Fe-2S] cluster</name>
        <dbReference type="ChEBI" id="CHEBI:190135"/>
    </cofactor>
    <text evidence="1">Binds 1 [2Fe-2S] cluster per subunit. This cluster acts as a Lewis acid cofactor.</text>
</comment>
<comment type="cofactor">
    <cofactor evidence="1">
        <name>Mg(2+)</name>
        <dbReference type="ChEBI" id="CHEBI:18420"/>
    </cofactor>
</comment>
<comment type="pathway">
    <text evidence="1">Amino-acid biosynthesis; L-isoleucine biosynthesis; L-isoleucine from 2-oxobutanoate: step 3/4.</text>
</comment>
<comment type="pathway">
    <text evidence="1">Amino-acid biosynthesis; L-valine biosynthesis; L-valine from pyruvate: step 3/4.</text>
</comment>
<comment type="subunit">
    <text evidence="1">Homodimer.</text>
</comment>
<comment type="similarity">
    <text evidence="1">Belongs to the IlvD/Edd family.</text>
</comment>
<protein>
    <recommendedName>
        <fullName evidence="1">Dihydroxy-acid dehydratase</fullName>
        <shortName evidence="1">DAD</shortName>
        <ecNumber evidence="1">4.2.1.9</ecNumber>
    </recommendedName>
</protein>
<keyword id="KW-0001">2Fe-2S</keyword>
<keyword id="KW-0028">Amino-acid biosynthesis</keyword>
<keyword id="KW-0100">Branched-chain amino acid biosynthesis</keyword>
<keyword id="KW-0408">Iron</keyword>
<keyword id="KW-0411">Iron-sulfur</keyword>
<keyword id="KW-0456">Lyase</keyword>
<keyword id="KW-0460">Magnesium</keyword>
<keyword id="KW-0479">Metal-binding</keyword>
<accession>A9VPN7</accession>
<gene>
    <name evidence="1" type="primary">ilvD</name>
    <name type="ordered locus">BcerKBAB4_1710</name>
</gene>